<proteinExistence type="inferred from homology"/>
<gene>
    <name evidence="1" type="primary">lepA</name>
    <name type="ordered locus">LCABL_17760</name>
</gene>
<comment type="function">
    <text evidence="1">Required for accurate and efficient protein synthesis under certain stress conditions. May act as a fidelity factor of the translation reaction, by catalyzing a one-codon backward translocation of tRNAs on improperly translocated ribosomes. Back-translocation proceeds from a post-translocation (POST) complex to a pre-translocation (PRE) complex, thus giving elongation factor G a second chance to translocate the tRNAs correctly. Binds to ribosomes in a GTP-dependent manner.</text>
</comment>
<comment type="catalytic activity">
    <reaction evidence="1">
        <text>GTP + H2O = GDP + phosphate + H(+)</text>
        <dbReference type="Rhea" id="RHEA:19669"/>
        <dbReference type="ChEBI" id="CHEBI:15377"/>
        <dbReference type="ChEBI" id="CHEBI:15378"/>
        <dbReference type="ChEBI" id="CHEBI:37565"/>
        <dbReference type="ChEBI" id="CHEBI:43474"/>
        <dbReference type="ChEBI" id="CHEBI:58189"/>
        <dbReference type="EC" id="3.6.5.n1"/>
    </reaction>
</comment>
<comment type="subcellular location">
    <subcellularLocation>
        <location evidence="1">Cell membrane</location>
        <topology evidence="1">Peripheral membrane protein</topology>
        <orientation evidence="1">Cytoplasmic side</orientation>
    </subcellularLocation>
</comment>
<comment type="similarity">
    <text evidence="1">Belongs to the TRAFAC class translation factor GTPase superfamily. Classic translation factor GTPase family. LepA subfamily.</text>
</comment>
<keyword id="KW-1003">Cell membrane</keyword>
<keyword id="KW-0342">GTP-binding</keyword>
<keyword id="KW-0378">Hydrolase</keyword>
<keyword id="KW-0472">Membrane</keyword>
<keyword id="KW-0547">Nucleotide-binding</keyword>
<keyword id="KW-0648">Protein biosynthesis</keyword>
<reference key="1">
    <citation type="submission" date="2008-06" db="EMBL/GenBank/DDBJ databases">
        <title>Lactobacillus casei BL23 complete genome sequence.</title>
        <authorList>
            <person name="Maze A."/>
            <person name="Boel G."/>
            <person name="Bourand A."/>
            <person name="Loux V."/>
            <person name="Gibrat J.F."/>
            <person name="Zuniga M."/>
            <person name="Hartke A."/>
            <person name="Deutscher J."/>
        </authorList>
    </citation>
    <scope>NUCLEOTIDE SEQUENCE [LARGE SCALE GENOMIC DNA]</scope>
    <source>
        <strain>BL23</strain>
    </source>
</reference>
<evidence type="ECO:0000255" key="1">
    <source>
        <dbReference type="HAMAP-Rule" id="MF_00071"/>
    </source>
</evidence>
<organism>
    <name type="scientific">Lacticaseibacillus casei (strain BL23)</name>
    <name type="common">Lactobacillus casei</name>
    <dbReference type="NCBI Taxonomy" id="543734"/>
    <lineage>
        <taxon>Bacteria</taxon>
        <taxon>Bacillati</taxon>
        <taxon>Bacillota</taxon>
        <taxon>Bacilli</taxon>
        <taxon>Lactobacillales</taxon>
        <taxon>Lactobacillaceae</taxon>
        <taxon>Lacticaseibacillus</taxon>
    </lineage>
</organism>
<sequence length="612" mass="68392">MNQEEMLDRQKHIRNFSIIAHIDHGKSTLADRILELTDTIAKRDMQAQVLDDMALERERGITIKLNAVELHYKAKNGETYIFHLIDTPGHVDFSYEVSRSLAACEGALLVVDATQGVEAQTLANVYLAIDDDLEIIPVINKVDLPSAQPDVVKEEIEEMIGLDASDAILASGKTGLGVPEILERIVTDVPAPSGDLNAPLQALIFDSVYDDYRGVVLDVRVKEGQVKVGDTIQLMSNGKQFQVTEVGVMSPKAVKRDFLMVGDVGYITAAIKTIQDTRVGDTVTLADRPAEKPLKGYRKITPMVYSGLFPVDNAKFNDLREALEKLQLNDAALEFEPETSQALGFGFRCGFLGLLHMDVVQERLERDYDLDLIMTAPSVDYEIIMTDGTEKTIDNPADMPEVSEIKEIREPYVKASIMVPNDYVGPVMELSQRKRGEFVTMDYLDKYRVNVIYNLPLSEIIYDFFDDLKSSTKGYASLDYEITGYRQSDLVKMDILLNGDPVDALSTIVHKDFAYERGKAIVARLKTTIPRQQFEIPIQAAIGNKVIARSTVKAYRKNVLAKCYGGDITRKRKLLEKQKAGKKRMKSVGSVEVPQEAFMSILKMNDEESQGK</sequence>
<protein>
    <recommendedName>
        <fullName evidence="1">Elongation factor 4</fullName>
        <shortName evidence="1">EF-4</shortName>
        <ecNumber evidence="1">3.6.5.n1</ecNumber>
    </recommendedName>
    <alternativeName>
        <fullName evidence="1">Ribosomal back-translocase LepA</fullName>
    </alternativeName>
</protein>
<accession>B3WEQ5</accession>
<feature type="chain" id="PRO_1000092411" description="Elongation factor 4">
    <location>
        <begin position="1"/>
        <end position="612"/>
    </location>
</feature>
<feature type="domain" description="tr-type G">
    <location>
        <begin position="11"/>
        <end position="193"/>
    </location>
</feature>
<feature type="binding site" evidence="1">
    <location>
        <begin position="23"/>
        <end position="28"/>
    </location>
    <ligand>
        <name>GTP</name>
        <dbReference type="ChEBI" id="CHEBI:37565"/>
    </ligand>
</feature>
<feature type="binding site" evidence="1">
    <location>
        <begin position="140"/>
        <end position="143"/>
    </location>
    <ligand>
        <name>GTP</name>
        <dbReference type="ChEBI" id="CHEBI:37565"/>
    </ligand>
</feature>
<name>LEPA_LACCB</name>
<dbReference type="EC" id="3.6.5.n1" evidence="1"/>
<dbReference type="EMBL" id="FM177140">
    <property type="protein sequence ID" value="CAQ66856.1"/>
    <property type="molecule type" value="Genomic_DNA"/>
</dbReference>
<dbReference type="SMR" id="B3WEQ5"/>
<dbReference type="KEGG" id="lcb:LCABL_17760"/>
<dbReference type="HOGENOM" id="CLU_009995_3_3_9"/>
<dbReference type="GO" id="GO:0005886">
    <property type="term" value="C:plasma membrane"/>
    <property type="evidence" value="ECO:0007669"/>
    <property type="project" value="UniProtKB-SubCell"/>
</dbReference>
<dbReference type="GO" id="GO:0005525">
    <property type="term" value="F:GTP binding"/>
    <property type="evidence" value="ECO:0007669"/>
    <property type="project" value="UniProtKB-UniRule"/>
</dbReference>
<dbReference type="GO" id="GO:0003924">
    <property type="term" value="F:GTPase activity"/>
    <property type="evidence" value="ECO:0007669"/>
    <property type="project" value="UniProtKB-UniRule"/>
</dbReference>
<dbReference type="GO" id="GO:0043022">
    <property type="term" value="F:ribosome binding"/>
    <property type="evidence" value="ECO:0007669"/>
    <property type="project" value="UniProtKB-UniRule"/>
</dbReference>
<dbReference type="GO" id="GO:0003746">
    <property type="term" value="F:translation elongation factor activity"/>
    <property type="evidence" value="ECO:0007669"/>
    <property type="project" value="UniProtKB-UniRule"/>
</dbReference>
<dbReference type="GO" id="GO:0045727">
    <property type="term" value="P:positive regulation of translation"/>
    <property type="evidence" value="ECO:0007669"/>
    <property type="project" value="UniProtKB-UniRule"/>
</dbReference>
<dbReference type="CDD" id="cd03699">
    <property type="entry name" value="EF4_II"/>
    <property type="match status" value="1"/>
</dbReference>
<dbReference type="CDD" id="cd16260">
    <property type="entry name" value="EF4_III"/>
    <property type="match status" value="1"/>
</dbReference>
<dbReference type="CDD" id="cd01890">
    <property type="entry name" value="LepA"/>
    <property type="match status" value="1"/>
</dbReference>
<dbReference type="CDD" id="cd03709">
    <property type="entry name" value="lepA_C"/>
    <property type="match status" value="1"/>
</dbReference>
<dbReference type="FunFam" id="3.40.50.300:FF:000078">
    <property type="entry name" value="Elongation factor 4"/>
    <property type="match status" value="1"/>
</dbReference>
<dbReference type="FunFam" id="2.40.30.10:FF:000015">
    <property type="entry name" value="Translation factor GUF1, mitochondrial"/>
    <property type="match status" value="1"/>
</dbReference>
<dbReference type="FunFam" id="3.30.70.240:FF:000007">
    <property type="entry name" value="Translation factor GUF1, mitochondrial"/>
    <property type="match status" value="1"/>
</dbReference>
<dbReference type="FunFam" id="3.30.70.2570:FF:000001">
    <property type="entry name" value="Translation factor GUF1, mitochondrial"/>
    <property type="match status" value="1"/>
</dbReference>
<dbReference type="FunFam" id="3.30.70.870:FF:000004">
    <property type="entry name" value="Translation factor GUF1, mitochondrial"/>
    <property type="match status" value="1"/>
</dbReference>
<dbReference type="Gene3D" id="3.30.70.240">
    <property type="match status" value="1"/>
</dbReference>
<dbReference type="Gene3D" id="3.30.70.2570">
    <property type="entry name" value="Elongation factor 4, C-terminal domain"/>
    <property type="match status" value="1"/>
</dbReference>
<dbReference type="Gene3D" id="3.30.70.870">
    <property type="entry name" value="Elongation Factor G (Translational Gtpase), domain 3"/>
    <property type="match status" value="1"/>
</dbReference>
<dbReference type="Gene3D" id="3.40.50.300">
    <property type="entry name" value="P-loop containing nucleotide triphosphate hydrolases"/>
    <property type="match status" value="1"/>
</dbReference>
<dbReference type="Gene3D" id="2.40.30.10">
    <property type="entry name" value="Translation factors"/>
    <property type="match status" value="1"/>
</dbReference>
<dbReference type="HAMAP" id="MF_00071">
    <property type="entry name" value="LepA"/>
    <property type="match status" value="1"/>
</dbReference>
<dbReference type="InterPro" id="IPR006297">
    <property type="entry name" value="EF-4"/>
</dbReference>
<dbReference type="InterPro" id="IPR035647">
    <property type="entry name" value="EFG_III/V"/>
</dbReference>
<dbReference type="InterPro" id="IPR000640">
    <property type="entry name" value="EFG_V-like"/>
</dbReference>
<dbReference type="InterPro" id="IPR004161">
    <property type="entry name" value="EFTu-like_2"/>
</dbReference>
<dbReference type="InterPro" id="IPR038363">
    <property type="entry name" value="LepA_C_sf"/>
</dbReference>
<dbReference type="InterPro" id="IPR013842">
    <property type="entry name" value="LepA_CTD"/>
</dbReference>
<dbReference type="InterPro" id="IPR035654">
    <property type="entry name" value="LepA_IV"/>
</dbReference>
<dbReference type="InterPro" id="IPR027417">
    <property type="entry name" value="P-loop_NTPase"/>
</dbReference>
<dbReference type="InterPro" id="IPR005225">
    <property type="entry name" value="Small_GTP-bd"/>
</dbReference>
<dbReference type="InterPro" id="IPR000795">
    <property type="entry name" value="T_Tr_GTP-bd_dom"/>
</dbReference>
<dbReference type="NCBIfam" id="TIGR01393">
    <property type="entry name" value="lepA"/>
    <property type="match status" value="1"/>
</dbReference>
<dbReference type="NCBIfam" id="TIGR00231">
    <property type="entry name" value="small_GTP"/>
    <property type="match status" value="1"/>
</dbReference>
<dbReference type="PANTHER" id="PTHR43512:SF4">
    <property type="entry name" value="TRANSLATION FACTOR GUF1 HOMOLOG, CHLOROPLASTIC"/>
    <property type="match status" value="1"/>
</dbReference>
<dbReference type="PANTHER" id="PTHR43512">
    <property type="entry name" value="TRANSLATION FACTOR GUF1-RELATED"/>
    <property type="match status" value="1"/>
</dbReference>
<dbReference type="Pfam" id="PF00679">
    <property type="entry name" value="EFG_C"/>
    <property type="match status" value="1"/>
</dbReference>
<dbReference type="Pfam" id="PF00009">
    <property type="entry name" value="GTP_EFTU"/>
    <property type="match status" value="1"/>
</dbReference>
<dbReference type="Pfam" id="PF03144">
    <property type="entry name" value="GTP_EFTU_D2"/>
    <property type="match status" value="1"/>
</dbReference>
<dbReference type="Pfam" id="PF06421">
    <property type="entry name" value="LepA_C"/>
    <property type="match status" value="1"/>
</dbReference>
<dbReference type="PRINTS" id="PR00315">
    <property type="entry name" value="ELONGATNFCT"/>
</dbReference>
<dbReference type="SMART" id="SM00838">
    <property type="entry name" value="EFG_C"/>
    <property type="match status" value="1"/>
</dbReference>
<dbReference type="SUPFAM" id="SSF54980">
    <property type="entry name" value="EF-G C-terminal domain-like"/>
    <property type="match status" value="2"/>
</dbReference>
<dbReference type="SUPFAM" id="SSF52540">
    <property type="entry name" value="P-loop containing nucleoside triphosphate hydrolases"/>
    <property type="match status" value="1"/>
</dbReference>
<dbReference type="PROSITE" id="PS51722">
    <property type="entry name" value="G_TR_2"/>
    <property type="match status" value="1"/>
</dbReference>